<evidence type="ECO:0000255" key="1">
    <source>
        <dbReference type="HAMAP-Rule" id="MF_01185"/>
    </source>
</evidence>
<comment type="function">
    <text evidence="1">Acts as an anti-CsrA protein, binds CsrA and prevents it from repressing translation of its target genes, one of which is flagellin. Binds to flagellin and participates in the assembly of the flagellum.</text>
</comment>
<comment type="subunit">
    <text evidence="1">Interacts with translational regulator CsrA and flagellin(s).</text>
</comment>
<comment type="subcellular location">
    <subcellularLocation>
        <location evidence="1">Cytoplasm</location>
    </subcellularLocation>
</comment>
<comment type="similarity">
    <text evidence="1">Belongs to the FliW family.</text>
</comment>
<dbReference type="EMBL" id="CP001185">
    <property type="protein sequence ID" value="ACJ74972.1"/>
    <property type="molecule type" value="Genomic_DNA"/>
</dbReference>
<dbReference type="RefSeq" id="WP_012579608.1">
    <property type="nucleotide sequence ID" value="NC_011653.1"/>
</dbReference>
<dbReference type="SMR" id="B7IFV8"/>
<dbReference type="STRING" id="484019.THA_481"/>
<dbReference type="KEGG" id="taf:THA_481"/>
<dbReference type="eggNOG" id="COG1699">
    <property type="taxonomic scope" value="Bacteria"/>
</dbReference>
<dbReference type="HOGENOM" id="CLU_112356_0_2_0"/>
<dbReference type="OrthoDB" id="9801235at2"/>
<dbReference type="Proteomes" id="UP000002453">
    <property type="component" value="Chromosome"/>
</dbReference>
<dbReference type="GO" id="GO:0005737">
    <property type="term" value="C:cytoplasm"/>
    <property type="evidence" value="ECO:0007669"/>
    <property type="project" value="UniProtKB-SubCell"/>
</dbReference>
<dbReference type="GO" id="GO:0044780">
    <property type="term" value="P:bacterial-type flagellum assembly"/>
    <property type="evidence" value="ECO:0007669"/>
    <property type="project" value="UniProtKB-UniRule"/>
</dbReference>
<dbReference type="GO" id="GO:0006417">
    <property type="term" value="P:regulation of translation"/>
    <property type="evidence" value="ECO:0007669"/>
    <property type="project" value="UniProtKB-KW"/>
</dbReference>
<dbReference type="Gene3D" id="2.30.290.10">
    <property type="entry name" value="BH3618-like"/>
    <property type="match status" value="1"/>
</dbReference>
<dbReference type="HAMAP" id="MF_01185">
    <property type="entry name" value="FliW"/>
    <property type="match status" value="1"/>
</dbReference>
<dbReference type="InterPro" id="IPR003775">
    <property type="entry name" value="Flagellar_assembly_factor_FliW"/>
</dbReference>
<dbReference type="InterPro" id="IPR024046">
    <property type="entry name" value="Flagellar_assmbl_FliW_dom_sf"/>
</dbReference>
<dbReference type="NCBIfam" id="NF009793">
    <property type="entry name" value="PRK13285.1-1"/>
    <property type="match status" value="1"/>
</dbReference>
<dbReference type="PANTHER" id="PTHR39190">
    <property type="entry name" value="FLAGELLAR ASSEMBLY FACTOR FLIW"/>
    <property type="match status" value="1"/>
</dbReference>
<dbReference type="PANTHER" id="PTHR39190:SF1">
    <property type="entry name" value="FLAGELLAR ASSEMBLY FACTOR FLIW"/>
    <property type="match status" value="1"/>
</dbReference>
<dbReference type="Pfam" id="PF02623">
    <property type="entry name" value="FliW"/>
    <property type="match status" value="1"/>
</dbReference>
<dbReference type="SUPFAM" id="SSF141457">
    <property type="entry name" value="BH3618-like"/>
    <property type="match status" value="1"/>
</dbReference>
<sequence length="145" mass="16833">MKYNTRLGEIEINENEIITFEKGIPGFEHLRKFSVISLKDTLPILWLVSLEDENVSLPIIDPWIVDKNYEIEISNEDIKELEIEDKEKVAVWAILTIPSGHPEETTVNLRAPIVINMEKGKGKQIILDTEKYKIKHKLSEFSFQE</sequence>
<feature type="chain" id="PRO_1000138262" description="Flagellar assembly factor FliW">
    <location>
        <begin position="1"/>
        <end position="145"/>
    </location>
</feature>
<protein>
    <recommendedName>
        <fullName evidence="1">Flagellar assembly factor FliW</fullName>
    </recommendedName>
</protein>
<organism>
    <name type="scientific">Thermosipho africanus (strain TCF52B)</name>
    <dbReference type="NCBI Taxonomy" id="484019"/>
    <lineage>
        <taxon>Bacteria</taxon>
        <taxon>Thermotogati</taxon>
        <taxon>Thermotogota</taxon>
        <taxon>Thermotogae</taxon>
        <taxon>Thermotogales</taxon>
        <taxon>Fervidobacteriaceae</taxon>
        <taxon>Thermosipho</taxon>
    </lineage>
</organism>
<name>FLIW_THEAB</name>
<reference key="1">
    <citation type="journal article" date="2009" name="J. Bacteriol.">
        <title>The genome of Thermosipho africanus TCF52B: lateral genetic connections to the Firmicutes and Archaea.</title>
        <authorList>
            <person name="Nesboe C.L."/>
            <person name="Bapteste E."/>
            <person name="Curtis B."/>
            <person name="Dahle H."/>
            <person name="Lopez P."/>
            <person name="Macleod D."/>
            <person name="Dlutek M."/>
            <person name="Bowman S."/>
            <person name="Zhaxybayeva O."/>
            <person name="Birkeland N.-K."/>
            <person name="Doolittle W.F."/>
        </authorList>
    </citation>
    <scope>NUCLEOTIDE SEQUENCE [LARGE SCALE GENOMIC DNA]</scope>
    <source>
        <strain>TCF52B</strain>
    </source>
</reference>
<proteinExistence type="inferred from homology"/>
<gene>
    <name evidence="1" type="primary">fliW</name>
    <name type="ordered locus">THA_481</name>
</gene>
<keyword id="KW-1005">Bacterial flagellum biogenesis</keyword>
<keyword id="KW-0143">Chaperone</keyword>
<keyword id="KW-0963">Cytoplasm</keyword>
<keyword id="KW-1185">Reference proteome</keyword>
<keyword id="KW-0810">Translation regulation</keyword>
<accession>B7IFV8</accession>